<organism>
    <name type="scientific">Trichophyton tonsurans (strain CBS 112818)</name>
    <name type="common">Scalp ringworm fungus</name>
    <dbReference type="NCBI Taxonomy" id="647933"/>
    <lineage>
        <taxon>Eukaryota</taxon>
        <taxon>Fungi</taxon>
        <taxon>Dikarya</taxon>
        <taxon>Ascomycota</taxon>
        <taxon>Pezizomycotina</taxon>
        <taxon>Eurotiomycetes</taxon>
        <taxon>Eurotiomycetidae</taxon>
        <taxon>Onygenales</taxon>
        <taxon>Arthrodermataceae</taxon>
        <taxon>Trichophyton</taxon>
    </lineage>
</organism>
<name>NSCC_TRIT1</name>
<reference key="1">
    <citation type="journal article" date="2012" name="MBio">
        <title>Comparative genome analysis of Trichophyton rubrum and related dermatophytes reveals candidate genes involved in infection.</title>
        <authorList>
            <person name="Martinez D.A."/>
            <person name="Oliver B.G."/>
            <person name="Graeser Y."/>
            <person name="Goldberg J.M."/>
            <person name="Li W."/>
            <person name="Martinez-Rossi N.M."/>
            <person name="Monod M."/>
            <person name="Shelest E."/>
            <person name="Barton R.C."/>
            <person name="Birch E."/>
            <person name="Brakhage A.A."/>
            <person name="Chen Z."/>
            <person name="Gurr S.J."/>
            <person name="Heiman D."/>
            <person name="Heitman J."/>
            <person name="Kosti I."/>
            <person name="Rossi A."/>
            <person name="Saif S."/>
            <person name="Samalova M."/>
            <person name="Saunders C.W."/>
            <person name="Shea T."/>
            <person name="Summerbell R.C."/>
            <person name="Xu J."/>
            <person name="Young S."/>
            <person name="Zeng Q."/>
            <person name="Birren B.W."/>
            <person name="Cuomo C.A."/>
            <person name="White T.C."/>
        </authorList>
    </citation>
    <scope>NUCLEOTIDE SEQUENCE [LARGE SCALE GENOMIC DNA]</scope>
    <source>
        <strain>CBS 112818</strain>
    </source>
</reference>
<reference key="2">
    <citation type="journal article" date="2013" name="ACS Synth. Biol.">
        <title>Discovery of cryptic polyketide metabolites from dermatophytes using heterologous expression in Aspergillus nidulans.</title>
        <authorList>
            <person name="Yin W.B."/>
            <person name="Chooi Y.H."/>
            <person name="Smith A.R."/>
            <person name="Cacho R.A."/>
            <person name="Hu Y."/>
            <person name="White T.C."/>
            <person name="Tang Y."/>
        </authorList>
    </citation>
    <scope>FUNCTION</scope>
</reference>
<reference key="3">
    <citation type="journal article" date="2013" name="Org. Lett.">
        <title>Genome mining of a prenylated and immunosuppressive polyketide from pathogenic fungi.</title>
        <authorList>
            <person name="Chooi Y.H."/>
            <person name="Fang J."/>
            <person name="Liu H."/>
            <person name="Filler S.G."/>
            <person name="Wang P."/>
            <person name="Tang Y."/>
        </authorList>
    </citation>
    <scope>FUNCTION</scope>
</reference>
<evidence type="ECO:0000250" key="1">
    <source>
        <dbReference type="UniProtKB" id="A1D8J0"/>
    </source>
</evidence>
<evidence type="ECO:0000250" key="2">
    <source>
        <dbReference type="UniProtKB" id="B8M9J8"/>
    </source>
</evidence>
<evidence type="ECO:0000255" key="3"/>
<evidence type="ECO:0000255" key="4">
    <source>
        <dbReference type="PROSITE-ProRule" id="PRU00498"/>
    </source>
</evidence>
<evidence type="ECO:0000269" key="5">
    <source>
    </source>
</evidence>
<evidence type="ECO:0000303" key="6">
    <source>
    </source>
</evidence>
<evidence type="ECO:0000305" key="7"/>
<evidence type="ECO:0000305" key="8">
    <source>
    </source>
</evidence>
<evidence type="ECO:0000305" key="9">
    <source>
    </source>
</evidence>
<keyword id="KW-0274">FAD</keyword>
<keyword id="KW-0285">Flavoprotein</keyword>
<keyword id="KW-0325">Glycoprotein</keyword>
<keyword id="KW-0503">Monooxygenase</keyword>
<keyword id="KW-0560">Oxidoreductase</keyword>
<keyword id="KW-0732">Signal</keyword>
<sequence>MGKQQETILIIGAGISGLATSRLLTNNGIPNIVFEASTPDRSQGFAISLQEFGYSTLLAALGDLPLSSLIRAVAPDRQIGGTGWIDQALRDNRTGELLVAPDLTTTKQTIVRANRNALRHWIADCGEDELDVRYGHKLQSIKGKLGDVTAIFENGAKYKGSLIIAADGVNSTSRSQILPDVVPETIPLIHYHGEFQLSHSAFDELIRPHSGHSNILVGVGDSFNTPLSICNITKTRVHLDWSYSRTVKGENDILYRPNVQSEEAKQIPPALLEELDALNLAEPWKTILNSESLKTHRVFHWTTRCVYITQDDARRAGEQGVIFVGDSWHAMPIFGGEGGNHALLDGVELADAIAASTASSGNGDWDSVIKNYYGGAWKRSQEAVRRSTQRFFLLHRPATEWKEISEQKKKPA</sequence>
<dbReference type="EC" id="1.-.-.-" evidence="9"/>
<dbReference type="EMBL" id="GG698521">
    <property type="protein sequence ID" value="EGD99350.1"/>
    <property type="molecule type" value="Genomic_DNA"/>
</dbReference>
<dbReference type="SMR" id="F2S701"/>
<dbReference type="GlyCosmos" id="F2S701">
    <property type="glycosylation" value="3 sites, No reported glycans"/>
</dbReference>
<dbReference type="HOGENOM" id="CLU_040697_0_0_1"/>
<dbReference type="OrthoDB" id="4603at34384"/>
<dbReference type="Proteomes" id="UP000009172">
    <property type="component" value="Unassembled WGS sequence"/>
</dbReference>
<dbReference type="GO" id="GO:0071949">
    <property type="term" value="F:FAD binding"/>
    <property type="evidence" value="ECO:0007669"/>
    <property type="project" value="InterPro"/>
</dbReference>
<dbReference type="GO" id="GO:0004497">
    <property type="term" value="F:monooxygenase activity"/>
    <property type="evidence" value="ECO:0007669"/>
    <property type="project" value="UniProtKB-KW"/>
</dbReference>
<dbReference type="Gene3D" id="3.50.50.60">
    <property type="entry name" value="FAD/NAD(P)-binding domain"/>
    <property type="match status" value="1"/>
</dbReference>
<dbReference type="InterPro" id="IPR002938">
    <property type="entry name" value="FAD-bd"/>
</dbReference>
<dbReference type="InterPro" id="IPR036188">
    <property type="entry name" value="FAD/NAD-bd_sf"/>
</dbReference>
<dbReference type="PANTHER" id="PTHR47178:SF4">
    <property type="entry name" value="FAD-DEPENDENT MONOOXYGENASE APTC"/>
    <property type="match status" value="1"/>
</dbReference>
<dbReference type="PANTHER" id="PTHR47178">
    <property type="entry name" value="MONOOXYGENASE, FAD-BINDING"/>
    <property type="match status" value="1"/>
</dbReference>
<dbReference type="Pfam" id="PF01494">
    <property type="entry name" value="FAD_binding_3"/>
    <property type="match status" value="1"/>
</dbReference>
<dbReference type="PRINTS" id="PR00420">
    <property type="entry name" value="RNGMNOXGNASE"/>
</dbReference>
<dbReference type="SUPFAM" id="SSF51905">
    <property type="entry name" value="FAD/NAD(P)-binding domain"/>
    <property type="match status" value="1"/>
</dbReference>
<gene>
    <name evidence="6" type="primary">nscC</name>
    <name type="ORF">TESG_06704</name>
</gene>
<feature type="signal peptide" evidence="3">
    <location>
        <begin position="1"/>
        <end position="21"/>
    </location>
</feature>
<feature type="chain" id="PRO_0000437908" description="FAD-dependent monooxygenase nscC">
    <location>
        <begin position="22"/>
        <end position="412"/>
    </location>
</feature>
<feature type="binding site" evidence="2">
    <location>
        <position position="35"/>
    </location>
    <ligand>
        <name>FAD</name>
        <dbReference type="ChEBI" id="CHEBI:57692"/>
    </ligand>
</feature>
<feature type="binding site" evidence="2">
    <location>
        <position position="46"/>
    </location>
    <ligand>
        <name>FAD</name>
        <dbReference type="ChEBI" id="CHEBI:57692"/>
    </ligand>
</feature>
<feature type="binding site" evidence="2">
    <location>
        <position position="119"/>
    </location>
    <ligand>
        <name>FAD</name>
        <dbReference type="ChEBI" id="CHEBI:57692"/>
    </ligand>
</feature>
<feature type="binding site" evidence="2">
    <location>
        <position position="326"/>
    </location>
    <ligand>
        <name>FAD</name>
        <dbReference type="ChEBI" id="CHEBI:57692"/>
    </ligand>
</feature>
<feature type="binding site" evidence="2">
    <location>
        <position position="339"/>
    </location>
    <ligand>
        <name>FAD</name>
        <dbReference type="ChEBI" id="CHEBI:57692"/>
    </ligand>
</feature>
<feature type="glycosylation site" description="N-linked (GlcNAc...) asparagine" evidence="4">
    <location>
        <position position="92"/>
    </location>
</feature>
<feature type="glycosylation site" description="N-linked (GlcNAc...) asparagine" evidence="4">
    <location>
        <position position="170"/>
    </location>
</feature>
<feature type="glycosylation site" description="N-linked (GlcNAc...) asparagine" evidence="4">
    <location>
        <position position="231"/>
    </location>
</feature>
<proteinExistence type="inferred from homology"/>
<comment type="function">
    <text evidence="1 5 8">FAD-dependent monooxygenase; part of the gene cluster that mediates the biosynthesis of neosartoricin B, a prenylated anthracenone that probably exhibits T-cell antiproliferative activity, suggestive of a physiological role as an immunosuppressive agent (PubMed:23368997, PubMed:23758576). The non-reducing polyketide synthase nscA probably synthesizes and cyclizes the decaketide backbone (By similarity). The hydrolase nscB then mediates the product release through hydrolysis followed by spontaneous decarboxylation (By similarity). The prenyltransferase nscD catalyzes the addition of the dimethylallyl group to the aromatic C5 (By similarity). The FAD-dependent monooxygenase nscC is then responsible for the stereospecific hydroxylation at C2 (By similarity). Neosartoricin B can be converted into two additional compounds neosartoricins C and D (PubMed:23758576). Neosartoricin C is a spirocyclic compound that is cyclized through the attack of C3 hydroxyl on C14, followed by dehydration (PubMed:23758576). On the other hand, neosartoricin D is a further cyclized compound in which attack of C2 on C14 in neosartoricin C results in the formation of the acetal-containing dioxabicyclo-octanone ring (PubMed:23758576). Both of these compounds are novel and possibly represent related metabolites of the gene cluster (PubMed:23758576).</text>
</comment>
<comment type="cofactor">
    <cofactor evidence="7">
        <name>FAD</name>
        <dbReference type="ChEBI" id="CHEBI:57692"/>
    </cofactor>
</comment>
<comment type="pathway">
    <text evidence="5">Secondary metabolite biosynthesis.</text>
</comment>
<comment type="similarity">
    <text evidence="7">Belongs to the paxM FAD-dependent monooxygenase family.</text>
</comment>
<accession>F2S701</accession>
<protein>
    <recommendedName>
        <fullName evidence="6">FAD-dependent monooxygenase nscC</fullName>
        <ecNumber evidence="9">1.-.-.-</ecNumber>
    </recommendedName>
    <alternativeName>
        <fullName evidence="6">Neosartoricin B biosynthesis protein C</fullName>
    </alternativeName>
</protein>